<protein>
    <recommendedName>
        <fullName evidence="1">Inner membrane-spanning protein YciB</fullName>
    </recommendedName>
</protein>
<dbReference type="EMBL" id="AM933173">
    <property type="protein sequence ID" value="CAR37253.1"/>
    <property type="molecule type" value="Genomic_DNA"/>
</dbReference>
<dbReference type="RefSeq" id="WP_000808682.1">
    <property type="nucleotide sequence ID" value="NC_011274.1"/>
</dbReference>
<dbReference type="KEGG" id="seg:SG1380"/>
<dbReference type="HOGENOM" id="CLU_089554_2_0_6"/>
<dbReference type="Proteomes" id="UP000008321">
    <property type="component" value="Chromosome"/>
</dbReference>
<dbReference type="GO" id="GO:0005886">
    <property type="term" value="C:plasma membrane"/>
    <property type="evidence" value="ECO:0007669"/>
    <property type="project" value="UniProtKB-SubCell"/>
</dbReference>
<dbReference type="HAMAP" id="MF_00189">
    <property type="entry name" value="YciB"/>
    <property type="match status" value="1"/>
</dbReference>
<dbReference type="InterPro" id="IPR006008">
    <property type="entry name" value="YciB"/>
</dbReference>
<dbReference type="NCBIfam" id="TIGR00997">
    <property type="entry name" value="ispZ"/>
    <property type="match status" value="1"/>
</dbReference>
<dbReference type="NCBIfam" id="NF001324">
    <property type="entry name" value="PRK00259.1-2"/>
    <property type="match status" value="1"/>
</dbReference>
<dbReference type="NCBIfam" id="NF001325">
    <property type="entry name" value="PRK00259.1-3"/>
    <property type="match status" value="1"/>
</dbReference>
<dbReference type="NCBIfam" id="NF001326">
    <property type="entry name" value="PRK00259.1-4"/>
    <property type="match status" value="1"/>
</dbReference>
<dbReference type="PANTHER" id="PTHR36917:SF1">
    <property type="entry name" value="INNER MEMBRANE-SPANNING PROTEIN YCIB"/>
    <property type="match status" value="1"/>
</dbReference>
<dbReference type="PANTHER" id="PTHR36917">
    <property type="entry name" value="INTRACELLULAR SEPTATION PROTEIN A-RELATED"/>
    <property type="match status" value="1"/>
</dbReference>
<dbReference type="Pfam" id="PF04279">
    <property type="entry name" value="IspA"/>
    <property type="match status" value="1"/>
</dbReference>
<proteinExistence type="inferred from homology"/>
<name>YCIB_SALG2</name>
<feature type="chain" id="PRO_1000098893" description="Inner membrane-spanning protein YciB">
    <location>
        <begin position="1"/>
        <end position="179"/>
    </location>
</feature>
<feature type="transmembrane region" description="Helical" evidence="1">
    <location>
        <begin position="22"/>
        <end position="42"/>
    </location>
</feature>
<feature type="transmembrane region" description="Helical" evidence="1">
    <location>
        <begin position="50"/>
        <end position="70"/>
    </location>
</feature>
<feature type="transmembrane region" description="Helical" evidence="1">
    <location>
        <begin position="76"/>
        <end position="96"/>
    </location>
</feature>
<feature type="transmembrane region" description="Helical" evidence="1">
    <location>
        <begin position="121"/>
        <end position="141"/>
    </location>
</feature>
<feature type="transmembrane region" description="Helical" evidence="1">
    <location>
        <begin position="149"/>
        <end position="169"/>
    </location>
</feature>
<evidence type="ECO:0000255" key="1">
    <source>
        <dbReference type="HAMAP-Rule" id="MF_00189"/>
    </source>
</evidence>
<accession>B5R6L6</accession>
<gene>
    <name evidence="1" type="primary">yciB</name>
    <name type="ordered locus">SG1380</name>
</gene>
<comment type="function">
    <text evidence="1">Plays a role in cell envelope biogenesis, maintenance of cell envelope integrity and membrane homeostasis.</text>
</comment>
<comment type="subcellular location">
    <subcellularLocation>
        <location evidence="1">Cell inner membrane</location>
        <topology evidence="1">Multi-pass membrane protein</topology>
    </subcellularLocation>
</comment>
<comment type="similarity">
    <text evidence="1">Belongs to the YciB family.</text>
</comment>
<reference key="1">
    <citation type="journal article" date="2008" name="Genome Res.">
        <title>Comparative genome analysis of Salmonella enteritidis PT4 and Salmonella gallinarum 287/91 provides insights into evolutionary and host adaptation pathways.</title>
        <authorList>
            <person name="Thomson N.R."/>
            <person name="Clayton D.J."/>
            <person name="Windhorst D."/>
            <person name="Vernikos G."/>
            <person name="Davidson S."/>
            <person name="Churcher C."/>
            <person name="Quail M.A."/>
            <person name="Stevens M."/>
            <person name="Jones M.A."/>
            <person name="Watson M."/>
            <person name="Barron A."/>
            <person name="Layton A."/>
            <person name="Pickard D."/>
            <person name="Kingsley R.A."/>
            <person name="Bignell A."/>
            <person name="Clark L."/>
            <person name="Harris B."/>
            <person name="Ormond D."/>
            <person name="Abdellah Z."/>
            <person name="Brooks K."/>
            <person name="Cherevach I."/>
            <person name="Chillingworth T."/>
            <person name="Woodward J."/>
            <person name="Norberczak H."/>
            <person name="Lord A."/>
            <person name="Arrowsmith C."/>
            <person name="Jagels K."/>
            <person name="Moule S."/>
            <person name="Mungall K."/>
            <person name="Saunders M."/>
            <person name="Whitehead S."/>
            <person name="Chabalgoity J.A."/>
            <person name="Maskell D."/>
            <person name="Humphreys T."/>
            <person name="Roberts M."/>
            <person name="Barrow P.A."/>
            <person name="Dougan G."/>
            <person name="Parkhill J."/>
        </authorList>
    </citation>
    <scope>NUCLEOTIDE SEQUENCE [LARGE SCALE GENOMIC DNA]</scope>
    <source>
        <strain>287/91 / NCTC 13346</strain>
    </source>
</reference>
<sequence>MKQFLDFLPLVVFFAFYKLYDIYAATSALIVATAIVLIYSWVRYRKIEKMALITFVLVAVFGGLTLFFHNDEFIKWKVTVIYALFAGALLISQWVMKKPLIQRMLGKELALPQQVWSKLNLAWALFFIACGLANIYIAFWLPQNIWVNFKVFGLTALTLIFTLLSGVYIYRHLPQEDKS</sequence>
<organism>
    <name type="scientific">Salmonella gallinarum (strain 287/91 / NCTC 13346)</name>
    <dbReference type="NCBI Taxonomy" id="550538"/>
    <lineage>
        <taxon>Bacteria</taxon>
        <taxon>Pseudomonadati</taxon>
        <taxon>Pseudomonadota</taxon>
        <taxon>Gammaproteobacteria</taxon>
        <taxon>Enterobacterales</taxon>
        <taxon>Enterobacteriaceae</taxon>
        <taxon>Salmonella</taxon>
    </lineage>
</organism>
<keyword id="KW-0997">Cell inner membrane</keyword>
<keyword id="KW-1003">Cell membrane</keyword>
<keyword id="KW-0472">Membrane</keyword>
<keyword id="KW-0812">Transmembrane</keyword>
<keyword id="KW-1133">Transmembrane helix</keyword>